<protein>
    <recommendedName>
        <fullName>Replication-associated protein</fullName>
        <shortName>Rep</shortName>
        <ecNumber>2.7.7.-</ecNumber>
        <ecNumber>3.1.21.-</ecNumber>
    </recommendedName>
</protein>
<evidence type="ECO:0000250" key="1"/>
<evidence type="ECO:0000255" key="2"/>
<evidence type="ECO:0000255" key="3">
    <source>
        <dbReference type="PROSITE-ProRule" id="PRU01364"/>
    </source>
</evidence>
<evidence type="ECO:0000256" key="4">
    <source>
        <dbReference type="SAM" id="MobiDB-lite"/>
    </source>
</evidence>
<evidence type="ECO:0000305" key="5"/>
<organism>
    <name type="scientific">Maize streak virus genotype B (isolate Tas)</name>
    <name type="common">MSV</name>
    <dbReference type="NCBI Taxonomy" id="268409"/>
    <lineage>
        <taxon>Viruses</taxon>
        <taxon>Monodnaviria</taxon>
        <taxon>Shotokuvirae</taxon>
        <taxon>Cressdnaviricota</taxon>
        <taxon>Repensiviricetes</taxon>
        <taxon>Geplafuvirales</taxon>
        <taxon>Geminiviridae</taxon>
        <taxon>Mastrevirus</taxon>
        <taxon>Maize streak virus</taxon>
    </lineage>
</organism>
<sequence>MASSSSNRQFSHRNVNTFLTYPHCPENPEIVCQMIWELVGRWTPKYIICAQEAHKDGDMHLHALLQTEKPVRITDSRFFDIEGFHPNIQSAKSVNKVRDYILKEPLAVFERGTFIPRKSSFQGNPSKGNSEKKPSKDEIMREIISHSTSKLEYLSMIRKEFPYDWATKLQYFEYSANKLFPEIQEEFISPHPPSSPDLLCNESIKDWLQPNIFQPTDEGTRKQSLYIVGPTRTGKSTWARSLGLHNYWQNNVDWSSYNEDAIYNIVDDIPFKFCPCWKQLVGCQKEFVVNPKYGKKKKVQMKSKPTIILANWDEDWMNEMTPGQLEYFEANCMIYKMSPGEKWYSPPVLPPTEEV</sequence>
<proteinExistence type="inferred from homology"/>
<reference key="1">
    <citation type="submission" date="2000-03" db="EMBL/GenBank/DDBJ databases">
        <title>Characterization of three maize streak viruses.</title>
        <authorList>
            <person name="Willment J.A."/>
            <person name="Martin D.P."/>
            <person name="Rybicki E.P."/>
        </authorList>
    </citation>
    <scope>NUCLEOTIDE SEQUENCE [GENOMIC DNA]</scope>
</reference>
<keyword id="KW-0025">Alternative splicing</keyword>
<keyword id="KW-0067">ATP-binding</keyword>
<keyword id="KW-0190">Covalent protein-DNA linkage</keyword>
<keyword id="KW-0235">DNA replication</keyword>
<keyword id="KW-0238">DNA-binding</keyword>
<keyword id="KW-0255">Endonuclease</keyword>
<keyword id="KW-0347">Helicase</keyword>
<keyword id="KW-1048">Host nucleus</keyword>
<keyword id="KW-0378">Hydrolase</keyword>
<keyword id="KW-0479">Metal-binding</keyword>
<keyword id="KW-0511">Multifunctional enzyme</keyword>
<keyword id="KW-0540">Nuclease</keyword>
<keyword id="KW-0547">Nucleotide-binding</keyword>
<keyword id="KW-0548">Nucleotidyltransferase</keyword>
<keyword id="KW-0678">Repressor</keyword>
<keyword id="KW-0808">Transferase</keyword>
<accession>Q9IGY7</accession>
<feature type="chain" id="PRO_0000316932" description="Replication-associated protein">
    <location>
        <begin position="1"/>
        <end position="355"/>
    </location>
</feature>
<feature type="domain" description="CRESS-DNA virus Rep endonuclease" evidence="3">
    <location>
        <begin position="11"/>
        <end position="114"/>
    </location>
</feature>
<feature type="region of interest" description="Disordered" evidence="4">
    <location>
        <begin position="119"/>
        <end position="138"/>
    </location>
</feature>
<feature type="region of interest" description="Oligomerization" evidence="1">
    <location>
        <begin position="175"/>
        <end position="187"/>
    </location>
</feature>
<feature type="region of interest" description="Transactivation" evidence="1">
    <location>
        <begin position="252"/>
        <end position="270"/>
    </location>
</feature>
<feature type="short sequence motif" description="RCR-1" evidence="3">
    <location>
        <begin position="18"/>
        <end position="21"/>
    </location>
</feature>
<feature type="short sequence motif" description="RCR-2" evidence="3">
    <location>
        <begin position="60"/>
        <end position="62"/>
    </location>
</feature>
<feature type="short sequence motif" description="RCR-3" evidence="3">
    <location>
        <begin position="100"/>
        <end position="103"/>
    </location>
</feature>
<feature type="short sequence motif" description="Nuclear localization signal" evidence="2">
    <location>
        <begin position="292"/>
        <end position="303"/>
    </location>
</feature>
<feature type="compositionally biased region" description="Polar residues" evidence="4">
    <location>
        <begin position="119"/>
        <end position="128"/>
    </location>
</feature>
<feature type="compositionally biased region" description="Basic and acidic residues" evidence="4">
    <location>
        <begin position="129"/>
        <end position="138"/>
    </location>
</feature>
<feature type="active site" description="For DNA cleavage activity" evidence="3">
    <location>
        <position position="100"/>
    </location>
</feature>
<feature type="binding site" evidence="3">
    <location>
        <position position="52"/>
    </location>
    <ligand>
        <name>a divalent metal cation</name>
        <dbReference type="ChEBI" id="CHEBI:60240"/>
    </ligand>
</feature>
<feature type="binding site" evidence="3">
    <location>
        <position position="60"/>
    </location>
    <ligand>
        <name>a divalent metal cation</name>
        <dbReference type="ChEBI" id="CHEBI:60240"/>
    </ligand>
</feature>
<feature type="binding site" evidence="3">
    <location>
        <position position="62"/>
    </location>
    <ligand>
        <name>a divalent metal cation</name>
        <dbReference type="ChEBI" id="CHEBI:60240"/>
    </ligand>
</feature>
<feature type="binding site" evidence="3">
    <location>
        <position position="104"/>
    </location>
    <ligand>
        <name>a divalent metal cation</name>
        <dbReference type="ChEBI" id="CHEBI:60240"/>
    </ligand>
</feature>
<feature type="binding site" evidence="2">
    <location>
        <begin position="229"/>
        <end position="236"/>
    </location>
    <ligand>
        <name>ATP</name>
        <dbReference type="ChEBI" id="CHEBI:30616"/>
    </ligand>
</feature>
<gene>
    <name type="ORF">C1/C2</name>
</gene>
<dbReference type="EC" id="2.7.7.-"/>
<dbReference type="EC" id="3.1.21.-"/>
<dbReference type="EMBL" id="AF239962">
    <property type="protein sequence ID" value="AAF97764.1"/>
    <property type="molecule type" value="Genomic_DNA"/>
</dbReference>
<dbReference type="SMR" id="Q9IGY7"/>
<dbReference type="Proteomes" id="UP000007782">
    <property type="component" value="Segment"/>
</dbReference>
<dbReference type="GO" id="GO:0042025">
    <property type="term" value="C:host cell nucleus"/>
    <property type="evidence" value="ECO:0007669"/>
    <property type="project" value="UniProtKB-SubCell"/>
</dbReference>
<dbReference type="GO" id="GO:0005524">
    <property type="term" value="F:ATP binding"/>
    <property type="evidence" value="ECO:0007669"/>
    <property type="project" value="UniProtKB-KW"/>
</dbReference>
<dbReference type="GO" id="GO:0003677">
    <property type="term" value="F:DNA binding"/>
    <property type="evidence" value="ECO:0007669"/>
    <property type="project" value="UniProtKB-KW"/>
</dbReference>
<dbReference type="GO" id="GO:0016888">
    <property type="term" value="F:endodeoxyribonuclease activity, producing 5'-phosphomonoesters"/>
    <property type="evidence" value="ECO:0007669"/>
    <property type="project" value="InterPro"/>
</dbReference>
<dbReference type="GO" id="GO:0004386">
    <property type="term" value="F:helicase activity"/>
    <property type="evidence" value="ECO:0007669"/>
    <property type="project" value="UniProtKB-KW"/>
</dbReference>
<dbReference type="GO" id="GO:0046872">
    <property type="term" value="F:metal ion binding"/>
    <property type="evidence" value="ECO:0007669"/>
    <property type="project" value="UniProtKB-KW"/>
</dbReference>
<dbReference type="GO" id="GO:0016779">
    <property type="term" value="F:nucleotidyltransferase activity"/>
    <property type="evidence" value="ECO:0007669"/>
    <property type="project" value="UniProtKB-KW"/>
</dbReference>
<dbReference type="GO" id="GO:0005198">
    <property type="term" value="F:structural molecule activity"/>
    <property type="evidence" value="ECO:0007669"/>
    <property type="project" value="InterPro"/>
</dbReference>
<dbReference type="GO" id="GO:0006260">
    <property type="term" value="P:DNA replication"/>
    <property type="evidence" value="ECO:0007669"/>
    <property type="project" value="UniProtKB-KW"/>
</dbReference>
<dbReference type="Gene3D" id="3.40.1310.20">
    <property type="match status" value="1"/>
</dbReference>
<dbReference type="InterPro" id="IPR049912">
    <property type="entry name" value="CRESS_DNA_REP"/>
</dbReference>
<dbReference type="InterPro" id="IPR001146">
    <property type="entry name" value="Gemini_AL1_MSV"/>
</dbReference>
<dbReference type="InterPro" id="IPR001191">
    <property type="entry name" value="Gemini_AL1_REP"/>
</dbReference>
<dbReference type="InterPro" id="IPR022692">
    <property type="entry name" value="Gemini_AL1_REP_central"/>
</dbReference>
<dbReference type="InterPro" id="IPR027417">
    <property type="entry name" value="P-loop_NTPase"/>
</dbReference>
<dbReference type="Pfam" id="PF00799">
    <property type="entry name" value="Gemini_AL1"/>
    <property type="match status" value="1"/>
</dbReference>
<dbReference type="Pfam" id="PF08283">
    <property type="entry name" value="Gemini_AL1_M"/>
    <property type="match status" value="1"/>
</dbReference>
<dbReference type="PRINTS" id="PR00227">
    <property type="entry name" value="GEMCOATAL1"/>
</dbReference>
<dbReference type="PRINTS" id="PR00229">
    <property type="entry name" value="GEMCOATMSVL1"/>
</dbReference>
<dbReference type="SUPFAM" id="SSF55464">
    <property type="entry name" value="Origin of replication-binding domain, RBD-like"/>
    <property type="match status" value="1"/>
</dbReference>
<dbReference type="SUPFAM" id="SSF52540">
    <property type="entry name" value="P-loop containing nucleoside triphosphate hydrolases"/>
    <property type="match status" value="1"/>
</dbReference>
<dbReference type="PROSITE" id="PS52020">
    <property type="entry name" value="CRESS_DNA_REP"/>
    <property type="match status" value="1"/>
</dbReference>
<name>REP_MSVTA</name>
<comment type="function">
    <text evidence="1">Essential for the replication of viral ssDNA. The closed circular ssDNA genome is first converted to a superhelical dsDNA. Rep binds a specific region at the genome origin of replication. It introduces an endonucleolytic nick within the conserved sequence 5'-TAATATTAC-3' in the intergenic region of the genome present in all geminiviruses, thereby initiating the rolling circle replication (RCR). Following cleavage, binds covalently to the 5'-phosphate of DNA as a tyrosyl ester. The cleavage gives rise to a free 3'-OH that serves as a primer for the cellular DNA polymerase. The polymerase synthesizes the (+) strand DNA by rolling circle mechanism. After one round of replication, a Rep-catalyzed nucleotidyl transfer reaction releases a circular single-stranded virus genome, thereby terminating the replication. Displays origin-specific DNA cleavage, nucleotidyl transferase, ATPase and helicase activities. Acts as an inhibitor of C-sense gene transcription (By similarity).</text>
</comment>
<comment type="cofactor">
    <cofactor evidence="3">
        <name>Mg(2+)</name>
        <dbReference type="ChEBI" id="CHEBI:18420"/>
    </cofactor>
    <cofactor evidence="3">
        <name>Mn(2+)</name>
        <dbReference type="ChEBI" id="CHEBI:29035"/>
    </cofactor>
    <text evidence="3">Divalent metal cations, possibly Mg(2+) or Mn(2+).</text>
</comment>
<comment type="subunit">
    <text>Homooligomer. Rep binds to repeated DNA motifs (iterons). Forms the O-complex, which is a Rep-DNA complex involved in the initiation of RCR. Part of the C- and V-complexes which are RepA-Rep-DNA complexes involved in the c-sense and v-sense transcription.</text>
</comment>
<comment type="subcellular location">
    <subcellularLocation>
        <location evidence="1">Host nucleus</location>
    </subcellularLocation>
</comment>
<comment type="alternative products">
    <event type="alternative splicing"/>
    <isoform>
        <id>Q9IGY7-1</id>
        <name>Rep</name>
        <sequence type="displayed"/>
    </isoform>
    <isoform>
        <id>Q9IGY6-1</id>
        <name>RepA</name>
        <sequence type="external"/>
    </isoform>
</comment>
<comment type="domain">
    <text>There are 3 rolling circle replication (RCR) motifs. RCR-2 is probably involved in metal coordination. RCR-3 is required for phosphodiester bond cleavage for initiation of RCR.</text>
</comment>
<comment type="similarity">
    <text evidence="5">Belongs to the geminiviridae Rep protein family.</text>
</comment>
<organismHost>
    <name type="scientific">Avena sativa</name>
    <name type="common">Oat</name>
    <dbReference type="NCBI Taxonomy" id="4498"/>
</organismHost>
<organismHost>
    <name type="scientific">Axonopus compressus</name>
    <dbReference type="NCBI Taxonomy" id="217170"/>
</organismHost>
<organismHost>
    <name type="scientific">Cenchrus americanus</name>
    <name type="common">Pearl millet</name>
    <name type="synonym">Pennisetum glaucum</name>
    <dbReference type="NCBI Taxonomy" id="4543"/>
</organismHost>
<organismHost>
    <name type="scientific">Cenchrus polystachios</name>
    <dbReference type="NCBI Taxonomy" id="281129"/>
</organismHost>
<organismHost>
    <name type="scientific">Coix lacryma-jobi</name>
    <name type="common">Job's tears</name>
    <dbReference type="NCBI Taxonomy" id="4505"/>
</organismHost>
<organismHost>
    <name type="scientific">Dactyloctenium aegyptium</name>
    <dbReference type="NCBI Taxonomy" id="270102"/>
</organismHost>
<organismHost>
    <name type="scientific">Digitaria</name>
    <dbReference type="NCBI Taxonomy" id="66017"/>
</organismHost>
<organismHost>
    <name type="scientific">Echinochloa colona</name>
    <dbReference type="NCBI Taxonomy" id="90396"/>
</organismHost>
<organismHost>
    <name type="scientific">Eleusine coracana</name>
    <name type="common">Indian finger millet</name>
    <name type="synonym">Ragi</name>
    <dbReference type="NCBI Taxonomy" id="4511"/>
</organismHost>
<organismHost>
    <name type="scientific">Eleusine indica</name>
    <name type="common">Goosegrass</name>
    <name type="synonym">Cynosurus indicus</name>
    <dbReference type="NCBI Taxonomy" id="29674"/>
</organismHost>
<organismHost>
    <name type="scientific">Hordeum vulgare</name>
    <name type="common">Barley</name>
    <dbReference type="NCBI Taxonomy" id="4513"/>
</organismHost>
<organismHost>
    <name type="scientific">Megathyrsus maximus</name>
    <dbReference type="NCBI Taxonomy" id="59788"/>
</organismHost>
<organismHost>
    <name type="scientific">Melinis repens</name>
    <name type="common">Red Natal grass</name>
    <name type="synonym">Rhynchelytrum repens</name>
    <dbReference type="NCBI Taxonomy" id="29709"/>
</organismHost>
<organismHost>
    <name type="scientific">Oryza glaberrima</name>
    <name type="common">African rice</name>
    <dbReference type="NCBI Taxonomy" id="4538"/>
</organismHost>
<organismHost>
    <name type="scientific">Oryza sativa</name>
    <name type="common">Rice</name>
    <dbReference type="NCBI Taxonomy" id="4530"/>
</organismHost>
<organismHost>
    <name type="scientific">Paspalum conjugatum</name>
    <name type="common">Hilo grass</name>
    <dbReference type="NCBI Taxonomy" id="158143"/>
</organismHost>
<organismHost>
    <name type="scientific">Paspalum notatum</name>
    <name type="common">Bahia grass</name>
    <dbReference type="NCBI Taxonomy" id="147272"/>
</organismHost>
<organismHost>
    <name type="scientific">Paspalum scrobiculatum</name>
    <dbReference type="NCBI Taxonomy" id="173849"/>
</organismHost>
<organismHost>
    <name type="scientific">Rottboellia cochinchinensis</name>
    <dbReference type="NCBI Taxonomy" id="300125"/>
</organismHost>
<organismHost>
    <name type="scientific">Saccharum officinarum</name>
    <name type="common">Sugarcane</name>
    <dbReference type="NCBI Taxonomy" id="4547"/>
</organismHost>
<organismHost>
    <name type="scientific">Setaria barbata</name>
    <dbReference type="NCBI Taxonomy" id="192628"/>
</organismHost>
<organismHost>
    <name type="scientific">Triticum aestivum</name>
    <name type="common">Wheat</name>
    <dbReference type="NCBI Taxonomy" id="4565"/>
</organismHost>
<organismHost>
    <name type="scientific">Urochloa deflexa</name>
    <dbReference type="NCBI Taxonomy" id="240436"/>
</organismHost>
<organismHost>
    <name type="scientific">Zea mays</name>
    <name type="common">Maize</name>
    <dbReference type="NCBI Taxonomy" id="4577"/>
</organismHost>